<gene>
    <name evidence="1" type="primary">rplS</name>
    <name type="ordered locus">BG0722</name>
</gene>
<feature type="chain" id="PRO_0000163420" description="Large ribosomal subunit protein bL19">
    <location>
        <begin position="1"/>
        <end position="121"/>
    </location>
</feature>
<name>RL19_BORGP</name>
<accession>Q660H2</accession>
<dbReference type="EMBL" id="CP000013">
    <property type="protein sequence ID" value="AAU07549.1"/>
    <property type="molecule type" value="Genomic_DNA"/>
</dbReference>
<dbReference type="RefSeq" id="WP_011194001.1">
    <property type="nucleotide sequence ID" value="NZ_CP028872.1"/>
</dbReference>
<dbReference type="SMR" id="Q660H2"/>
<dbReference type="GeneID" id="45161497"/>
<dbReference type="KEGG" id="bga:BG0722"/>
<dbReference type="eggNOG" id="COG0335">
    <property type="taxonomic scope" value="Bacteria"/>
</dbReference>
<dbReference type="HOGENOM" id="CLU_103507_2_2_12"/>
<dbReference type="OrthoDB" id="9803541at2"/>
<dbReference type="Proteomes" id="UP000002276">
    <property type="component" value="Chromosome"/>
</dbReference>
<dbReference type="GO" id="GO:0022625">
    <property type="term" value="C:cytosolic large ribosomal subunit"/>
    <property type="evidence" value="ECO:0007669"/>
    <property type="project" value="TreeGrafter"/>
</dbReference>
<dbReference type="GO" id="GO:0003735">
    <property type="term" value="F:structural constituent of ribosome"/>
    <property type="evidence" value="ECO:0007669"/>
    <property type="project" value="InterPro"/>
</dbReference>
<dbReference type="GO" id="GO:0006412">
    <property type="term" value="P:translation"/>
    <property type="evidence" value="ECO:0007669"/>
    <property type="project" value="UniProtKB-UniRule"/>
</dbReference>
<dbReference type="Gene3D" id="2.30.30.790">
    <property type="match status" value="1"/>
</dbReference>
<dbReference type="HAMAP" id="MF_00402">
    <property type="entry name" value="Ribosomal_bL19"/>
    <property type="match status" value="1"/>
</dbReference>
<dbReference type="InterPro" id="IPR001857">
    <property type="entry name" value="Ribosomal_bL19"/>
</dbReference>
<dbReference type="InterPro" id="IPR018257">
    <property type="entry name" value="Ribosomal_bL19_CS"/>
</dbReference>
<dbReference type="InterPro" id="IPR038657">
    <property type="entry name" value="Ribosomal_bL19_sf"/>
</dbReference>
<dbReference type="InterPro" id="IPR008991">
    <property type="entry name" value="Translation_prot_SH3-like_sf"/>
</dbReference>
<dbReference type="NCBIfam" id="TIGR01024">
    <property type="entry name" value="rplS_bact"/>
    <property type="match status" value="1"/>
</dbReference>
<dbReference type="PANTHER" id="PTHR15680:SF9">
    <property type="entry name" value="LARGE RIBOSOMAL SUBUNIT PROTEIN BL19M"/>
    <property type="match status" value="1"/>
</dbReference>
<dbReference type="PANTHER" id="PTHR15680">
    <property type="entry name" value="RIBOSOMAL PROTEIN L19"/>
    <property type="match status" value="1"/>
</dbReference>
<dbReference type="Pfam" id="PF01245">
    <property type="entry name" value="Ribosomal_L19"/>
    <property type="match status" value="1"/>
</dbReference>
<dbReference type="PIRSF" id="PIRSF002191">
    <property type="entry name" value="Ribosomal_L19"/>
    <property type="match status" value="1"/>
</dbReference>
<dbReference type="PRINTS" id="PR00061">
    <property type="entry name" value="RIBOSOMALL19"/>
</dbReference>
<dbReference type="SUPFAM" id="SSF50104">
    <property type="entry name" value="Translation proteins SH3-like domain"/>
    <property type="match status" value="1"/>
</dbReference>
<dbReference type="PROSITE" id="PS01015">
    <property type="entry name" value="RIBOSOMAL_L19"/>
    <property type="match status" value="1"/>
</dbReference>
<sequence length="121" mass="14011">MDLIRKIEAQNKKSEAFVFNVGDTVRVIYKIIEGSNERLQSFEGIIISFQNKGIGKTFLVRKISSGIGVEKIFPVYSPIIEKVEVLRRGKVRRAKLYYMRNRIGKAAMKIKERLNIKKVKH</sequence>
<comment type="function">
    <text evidence="1">This protein is located at the 30S-50S ribosomal subunit interface and may play a role in the structure and function of the aminoacyl-tRNA binding site.</text>
</comment>
<comment type="similarity">
    <text evidence="1">Belongs to the bacterial ribosomal protein bL19 family.</text>
</comment>
<evidence type="ECO:0000255" key="1">
    <source>
        <dbReference type="HAMAP-Rule" id="MF_00402"/>
    </source>
</evidence>
<evidence type="ECO:0000305" key="2"/>
<proteinExistence type="inferred from homology"/>
<organism>
    <name type="scientific">Borrelia garinii subsp. bavariensis (strain ATCC BAA-2496 / DSM 23469 / PBi)</name>
    <name type="common">Borreliella bavariensis</name>
    <dbReference type="NCBI Taxonomy" id="290434"/>
    <lineage>
        <taxon>Bacteria</taxon>
        <taxon>Pseudomonadati</taxon>
        <taxon>Spirochaetota</taxon>
        <taxon>Spirochaetia</taxon>
        <taxon>Spirochaetales</taxon>
        <taxon>Borreliaceae</taxon>
        <taxon>Borreliella</taxon>
    </lineage>
</organism>
<protein>
    <recommendedName>
        <fullName evidence="1">Large ribosomal subunit protein bL19</fullName>
    </recommendedName>
    <alternativeName>
        <fullName evidence="2">50S ribosomal protein L19</fullName>
    </alternativeName>
</protein>
<reference key="1">
    <citation type="journal article" date="2004" name="Nucleic Acids Res.">
        <title>Comparative analysis of the Borrelia garinii genome.</title>
        <authorList>
            <person name="Gloeckner G."/>
            <person name="Lehmann R."/>
            <person name="Romualdi A."/>
            <person name="Pradella S."/>
            <person name="Schulte-Spechtel U."/>
            <person name="Schilhabel M."/>
            <person name="Wilske B."/>
            <person name="Suehnel J."/>
            <person name="Platzer M."/>
        </authorList>
    </citation>
    <scope>NUCLEOTIDE SEQUENCE [LARGE SCALE GENOMIC DNA]</scope>
    <source>
        <strain>ATCC BAA-2496 / DSM 23469 / PBi</strain>
    </source>
</reference>
<keyword id="KW-0687">Ribonucleoprotein</keyword>
<keyword id="KW-0689">Ribosomal protein</keyword>